<keyword id="KW-0963">Cytoplasm</keyword>
<keyword id="KW-0488">Methylation</keyword>
<keyword id="KW-0648">Protein biosynthesis</keyword>
<keyword id="KW-1185">Reference proteome</keyword>
<comment type="function">
    <text evidence="1">Peptide chain release factor 1 directs the termination of translation in response to the peptide chain termination codons UAG and UAA.</text>
</comment>
<comment type="subcellular location">
    <subcellularLocation>
        <location evidence="1">Cytoplasm</location>
    </subcellularLocation>
</comment>
<comment type="PTM">
    <text evidence="1">Methylated by PrmC. Methylation increases the termination efficiency of RF1.</text>
</comment>
<comment type="similarity">
    <text evidence="1">Belongs to the prokaryotic/mitochondrial release factor family.</text>
</comment>
<sequence length="363" mass="40457">MKASIVAKLEVLVERYEEVQALLGDPGTISDQNKYRELTKEYAQLEVVVLSFKKYQSAQNDLAVAEMMSDDDDPDMREMAKEEIKEAKKTVEKLAADLQILLLPKDPNDDRNCYLEIRAGAGGDEAAIFAGNLFRMYSKYAESKGWRVEVMNSNASEQGGYKELIAKIDGEGAYGIMKFESGGHRVQRVPETESQGRIHTSACTVVVMPEVPEAEAISINPADLKVDTFRASGAGGQHVNKTDSAVRLTHLPTGTVVECQDQRSQHKNRAQAMSVLQSRLQQAEDEKSHAEEQTIRRSLVASGDRSERIRTYNYPQGRVSDHRINLTVYRLNEVLEGDLNALHEPILLEDQADKLAALSQAEF</sequence>
<evidence type="ECO:0000255" key="1">
    <source>
        <dbReference type="HAMAP-Rule" id="MF_00093"/>
    </source>
</evidence>
<evidence type="ECO:0000256" key="2">
    <source>
        <dbReference type="SAM" id="MobiDB-lite"/>
    </source>
</evidence>
<dbReference type="EMBL" id="CP000510">
    <property type="protein sequence ID" value="ABM03404.1"/>
    <property type="molecule type" value="Genomic_DNA"/>
</dbReference>
<dbReference type="RefSeq" id="WP_011769964.1">
    <property type="nucleotide sequence ID" value="NC_008709.1"/>
</dbReference>
<dbReference type="SMR" id="A1SV89"/>
<dbReference type="STRING" id="357804.Ping_1607"/>
<dbReference type="KEGG" id="pin:Ping_1607"/>
<dbReference type="eggNOG" id="COG0216">
    <property type="taxonomic scope" value="Bacteria"/>
</dbReference>
<dbReference type="HOGENOM" id="CLU_036856_0_1_6"/>
<dbReference type="OrthoDB" id="9806673at2"/>
<dbReference type="Proteomes" id="UP000000639">
    <property type="component" value="Chromosome"/>
</dbReference>
<dbReference type="GO" id="GO:0005737">
    <property type="term" value="C:cytoplasm"/>
    <property type="evidence" value="ECO:0007669"/>
    <property type="project" value="UniProtKB-SubCell"/>
</dbReference>
<dbReference type="GO" id="GO:0016149">
    <property type="term" value="F:translation release factor activity, codon specific"/>
    <property type="evidence" value="ECO:0007669"/>
    <property type="project" value="UniProtKB-UniRule"/>
</dbReference>
<dbReference type="FunFam" id="3.30.160.20:FF:000004">
    <property type="entry name" value="Peptide chain release factor 1"/>
    <property type="match status" value="1"/>
</dbReference>
<dbReference type="FunFam" id="3.30.70.1660:FF:000002">
    <property type="entry name" value="Peptide chain release factor 1"/>
    <property type="match status" value="1"/>
</dbReference>
<dbReference type="FunFam" id="3.30.70.1660:FF:000004">
    <property type="entry name" value="Peptide chain release factor 1"/>
    <property type="match status" value="1"/>
</dbReference>
<dbReference type="Gene3D" id="3.30.160.20">
    <property type="match status" value="1"/>
</dbReference>
<dbReference type="Gene3D" id="3.30.70.1660">
    <property type="match status" value="2"/>
</dbReference>
<dbReference type="Gene3D" id="6.10.140.1950">
    <property type="match status" value="1"/>
</dbReference>
<dbReference type="HAMAP" id="MF_00093">
    <property type="entry name" value="Rel_fac_1"/>
    <property type="match status" value="1"/>
</dbReference>
<dbReference type="InterPro" id="IPR005139">
    <property type="entry name" value="PCRF"/>
</dbReference>
<dbReference type="InterPro" id="IPR000352">
    <property type="entry name" value="Pep_chain_release_fac_I"/>
</dbReference>
<dbReference type="InterPro" id="IPR045853">
    <property type="entry name" value="Pep_chain_release_fac_I_sf"/>
</dbReference>
<dbReference type="InterPro" id="IPR050057">
    <property type="entry name" value="Prokaryotic/Mito_RF"/>
</dbReference>
<dbReference type="InterPro" id="IPR004373">
    <property type="entry name" value="RF-1"/>
</dbReference>
<dbReference type="NCBIfam" id="TIGR00019">
    <property type="entry name" value="prfA"/>
    <property type="match status" value="1"/>
</dbReference>
<dbReference type="NCBIfam" id="NF001859">
    <property type="entry name" value="PRK00591.1"/>
    <property type="match status" value="1"/>
</dbReference>
<dbReference type="PANTHER" id="PTHR43804">
    <property type="entry name" value="LD18447P"/>
    <property type="match status" value="1"/>
</dbReference>
<dbReference type="PANTHER" id="PTHR43804:SF7">
    <property type="entry name" value="LD18447P"/>
    <property type="match status" value="1"/>
</dbReference>
<dbReference type="Pfam" id="PF03462">
    <property type="entry name" value="PCRF"/>
    <property type="match status" value="1"/>
</dbReference>
<dbReference type="Pfam" id="PF00472">
    <property type="entry name" value="RF-1"/>
    <property type="match status" value="1"/>
</dbReference>
<dbReference type="SMART" id="SM00937">
    <property type="entry name" value="PCRF"/>
    <property type="match status" value="1"/>
</dbReference>
<dbReference type="SUPFAM" id="SSF75620">
    <property type="entry name" value="Release factor"/>
    <property type="match status" value="1"/>
</dbReference>
<dbReference type="PROSITE" id="PS00745">
    <property type="entry name" value="RF_PROK_I"/>
    <property type="match status" value="1"/>
</dbReference>
<accession>A1SV89</accession>
<protein>
    <recommendedName>
        <fullName evidence="1">Peptide chain release factor 1</fullName>
        <shortName evidence="1">RF-1</shortName>
    </recommendedName>
</protein>
<name>RF1_PSYIN</name>
<organism>
    <name type="scientific">Psychromonas ingrahamii (strain DSM 17664 / CCUG 51855 / 37)</name>
    <dbReference type="NCBI Taxonomy" id="357804"/>
    <lineage>
        <taxon>Bacteria</taxon>
        <taxon>Pseudomonadati</taxon>
        <taxon>Pseudomonadota</taxon>
        <taxon>Gammaproteobacteria</taxon>
        <taxon>Alteromonadales</taxon>
        <taxon>Psychromonadaceae</taxon>
        <taxon>Psychromonas</taxon>
    </lineage>
</organism>
<proteinExistence type="inferred from homology"/>
<reference key="1">
    <citation type="journal article" date="2008" name="BMC Genomics">
        <title>Genomics of an extreme psychrophile, Psychromonas ingrahamii.</title>
        <authorList>
            <person name="Riley M."/>
            <person name="Staley J.T."/>
            <person name="Danchin A."/>
            <person name="Wang T.Z."/>
            <person name="Brettin T.S."/>
            <person name="Hauser L.J."/>
            <person name="Land M.L."/>
            <person name="Thompson L.S."/>
        </authorList>
    </citation>
    <scope>NUCLEOTIDE SEQUENCE [LARGE SCALE GENOMIC DNA]</scope>
    <source>
        <strain>DSM 17664 / CCUG 51855 / 37</strain>
    </source>
</reference>
<feature type="chain" id="PRO_1000004937" description="Peptide chain release factor 1">
    <location>
        <begin position="1"/>
        <end position="363"/>
    </location>
</feature>
<feature type="region of interest" description="Disordered" evidence="2">
    <location>
        <begin position="281"/>
        <end position="302"/>
    </location>
</feature>
<feature type="compositionally biased region" description="Basic and acidic residues" evidence="2">
    <location>
        <begin position="282"/>
        <end position="295"/>
    </location>
</feature>
<feature type="modified residue" description="N5-methylglutamine" evidence="1">
    <location>
        <position position="237"/>
    </location>
</feature>
<gene>
    <name evidence="1" type="primary">prfA</name>
    <name type="ordered locus">Ping_1607</name>
</gene>